<gene>
    <name type="primary">Coro1a</name>
    <name type="synonym">Coro1</name>
</gene>
<organism>
    <name type="scientific">Rattus norvegicus</name>
    <name type="common">Rat</name>
    <dbReference type="NCBI Taxonomy" id="10116"/>
    <lineage>
        <taxon>Eukaryota</taxon>
        <taxon>Metazoa</taxon>
        <taxon>Chordata</taxon>
        <taxon>Craniata</taxon>
        <taxon>Vertebrata</taxon>
        <taxon>Euteleostomi</taxon>
        <taxon>Mammalia</taxon>
        <taxon>Eutheria</taxon>
        <taxon>Euarchontoglires</taxon>
        <taxon>Glires</taxon>
        <taxon>Rodentia</taxon>
        <taxon>Myomorpha</taxon>
        <taxon>Muroidea</taxon>
        <taxon>Muridae</taxon>
        <taxon>Murinae</taxon>
        <taxon>Rattus</taxon>
    </lineage>
</organism>
<evidence type="ECO:0000250" key="1"/>
<evidence type="ECO:0000250" key="2">
    <source>
        <dbReference type="UniProtKB" id="O89053"/>
    </source>
</evidence>
<evidence type="ECO:0000250" key="3">
    <source>
        <dbReference type="UniProtKB" id="P31146"/>
    </source>
</evidence>
<evidence type="ECO:0000255" key="4"/>
<evidence type="ECO:0000256" key="5">
    <source>
        <dbReference type="SAM" id="MobiDB-lite"/>
    </source>
</evidence>
<evidence type="ECO:0000305" key="6"/>
<evidence type="ECO:0007744" key="7">
    <source>
    </source>
</evidence>
<keyword id="KW-0007">Acetylation</keyword>
<keyword id="KW-0009">Actin-binding</keyword>
<keyword id="KW-0175">Coiled coil</keyword>
<keyword id="KW-0963">Cytoplasm</keyword>
<keyword id="KW-0968">Cytoplasmic vesicle</keyword>
<keyword id="KW-0206">Cytoskeleton</keyword>
<keyword id="KW-0903">Direct protein sequencing</keyword>
<keyword id="KW-0472">Membrane</keyword>
<keyword id="KW-0597">Phosphoprotein</keyword>
<keyword id="KW-1185">Reference proteome</keyword>
<keyword id="KW-0677">Repeat</keyword>
<keyword id="KW-0832">Ubl conjugation</keyword>
<keyword id="KW-0853">WD repeat</keyword>
<dbReference type="EMBL" id="AF416730">
    <property type="protein sequence ID" value="AAL18695.1"/>
    <property type="molecule type" value="mRNA"/>
</dbReference>
<dbReference type="EMBL" id="AF495469">
    <property type="protein sequence ID" value="AAM18515.1"/>
    <property type="molecule type" value="mRNA"/>
</dbReference>
<dbReference type="EMBL" id="BC086971">
    <property type="protein sequence ID" value="AAH86971.1"/>
    <property type="molecule type" value="mRNA"/>
</dbReference>
<dbReference type="RefSeq" id="NP_569095.1">
    <property type="nucleotide sequence ID" value="NM_130411.2"/>
</dbReference>
<dbReference type="RefSeq" id="XP_017444198.1">
    <property type="nucleotide sequence ID" value="XM_017588709.3"/>
</dbReference>
<dbReference type="RefSeq" id="XP_038939351.1">
    <property type="nucleotide sequence ID" value="XM_039083423.2"/>
</dbReference>
<dbReference type="SMR" id="Q91ZN1"/>
<dbReference type="BioGRID" id="250886">
    <property type="interactions" value="1"/>
</dbReference>
<dbReference type="FunCoup" id="Q91ZN1">
    <property type="interactions" value="1357"/>
</dbReference>
<dbReference type="STRING" id="10116.ENSRNOP00000026496"/>
<dbReference type="GlyGen" id="Q91ZN1">
    <property type="glycosylation" value="1 site, 1 O-linked glycan (1 site)"/>
</dbReference>
<dbReference type="iPTMnet" id="Q91ZN1"/>
<dbReference type="PhosphoSitePlus" id="Q91ZN1"/>
<dbReference type="jPOST" id="Q91ZN1"/>
<dbReference type="PaxDb" id="10116-ENSRNOP00000026496"/>
<dbReference type="Ensembl" id="ENSRNOT00000026496.4">
    <property type="protein sequence ID" value="ENSRNOP00000026496.2"/>
    <property type="gene ID" value="ENSRNOG00000019430.4"/>
</dbReference>
<dbReference type="GeneID" id="155151"/>
<dbReference type="KEGG" id="rno:155151"/>
<dbReference type="UCSC" id="RGD:620009">
    <property type="organism name" value="rat"/>
</dbReference>
<dbReference type="AGR" id="RGD:620009"/>
<dbReference type="CTD" id="11151"/>
<dbReference type="RGD" id="620009">
    <property type="gene designation" value="Coro1a"/>
</dbReference>
<dbReference type="eggNOG" id="KOG0303">
    <property type="taxonomic scope" value="Eukaryota"/>
</dbReference>
<dbReference type="GeneTree" id="ENSGT00940000160628"/>
<dbReference type="HOGENOM" id="CLU_026859_0_1_1"/>
<dbReference type="InParanoid" id="Q91ZN1"/>
<dbReference type="OMA" id="MVMVWEI"/>
<dbReference type="OrthoDB" id="1850764at2759"/>
<dbReference type="PhylomeDB" id="Q91ZN1"/>
<dbReference type="TreeFam" id="TF314280"/>
<dbReference type="PRO" id="PR:Q91ZN1"/>
<dbReference type="Proteomes" id="UP000002494">
    <property type="component" value="Chromosome 1"/>
</dbReference>
<dbReference type="Bgee" id="ENSRNOG00000019430">
    <property type="expression patterns" value="Expressed in thymus and 19 other cell types or tissues"/>
</dbReference>
<dbReference type="GO" id="GO:0015629">
    <property type="term" value="C:actin cytoskeleton"/>
    <property type="evidence" value="ECO:0000266"/>
    <property type="project" value="RGD"/>
</dbReference>
<dbReference type="GO" id="GO:0005884">
    <property type="term" value="C:actin filament"/>
    <property type="evidence" value="ECO:0000266"/>
    <property type="project" value="RGD"/>
</dbReference>
<dbReference type="GO" id="GO:0030424">
    <property type="term" value="C:axon"/>
    <property type="evidence" value="ECO:0000266"/>
    <property type="project" value="RGD"/>
</dbReference>
<dbReference type="GO" id="GO:0031252">
    <property type="term" value="C:cell leading edge"/>
    <property type="evidence" value="ECO:0000266"/>
    <property type="project" value="RGD"/>
</dbReference>
<dbReference type="GO" id="GO:0005911">
    <property type="term" value="C:cell-cell junction"/>
    <property type="evidence" value="ECO:0000266"/>
    <property type="project" value="RGD"/>
</dbReference>
<dbReference type="GO" id="GO:0030864">
    <property type="term" value="C:cortical actin cytoskeleton"/>
    <property type="evidence" value="ECO:0000266"/>
    <property type="project" value="RGD"/>
</dbReference>
<dbReference type="GO" id="GO:0005737">
    <property type="term" value="C:cytoplasm"/>
    <property type="evidence" value="ECO:0000266"/>
    <property type="project" value="RGD"/>
</dbReference>
<dbReference type="GO" id="GO:0005769">
    <property type="term" value="C:early endosome"/>
    <property type="evidence" value="ECO:0000266"/>
    <property type="project" value="RGD"/>
</dbReference>
<dbReference type="GO" id="GO:0098978">
    <property type="term" value="C:glutamatergic synapse"/>
    <property type="evidence" value="ECO:0000266"/>
    <property type="project" value="RGD"/>
</dbReference>
<dbReference type="GO" id="GO:0001772">
    <property type="term" value="C:immunological synapse"/>
    <property type="evidence" value="ECO:0000266"/>
    <property type="project" value="RGD"/>
</dbReference>
<dbReference type="GO" id="GO:0030027">
    <property type="term" value="C:lamellipodium"/>
    <property type="evidence" value="ECO:0000266"/>
    <property type="project" value="RGD"/>
</dbReference>
<dbReference type="GO" id="GO:0001891">
    <property type="term" value="C:phagocytic cup"/>
    <property type="evidence" value="ECO:0000266"/>
    <property type="project" value="RGD"/>
</dbReference>
<dbReference type="GO" id="GO:0045335">
    <property type="term" value="C:phagocytic vesicle"/>
    <property type="evidence" value="ECO:0000266"/>
    <property type="project" value="RGD"/>
</dbReference>
<dbReference type="GO" id="GO:0030670">
    <property type="term" value="C:phagocytic vesicle membrane"/>
    <property type="evidence" value="ECO:0007669"/>
    <property type="project" value="UniProtKB-SubCell"/>
</dbReference>
<dbReference type="GO" id="GO:0005886">
    <property type="term" value="C:plasma membrane"/>
    <property type="evidence" value="ECO:0000266"/>
    <property type="project" value="RGD"/>
</dbReference>
<dbReference type="GO" id="GO:0032991">
    <property type="term" value="C:protein-containing complex"/>
    <property type="evidence" value="ECO:0000266"/>
    <property type="project" value="RGD"/>
</dbReference>
<dbReference type="GO" id="GO:0032426">
    <property type="term" value="C:stereocilium tip"/>
    <property type="evidence" value="ECO:0000266"/>
    <property type="project" value="RGD"/>
</dbReference>
<dbReference type="GO" id="GO:0045202">
    <property type="term" value="C:synapse"/>
    <property type="evidence" value="ECO:0000266"/>
    <property type="project" value="RGD"/>
</dbReference>
<dbReference type="GO" id="GO:0003779">
    <property type="term" value="F:actin binding"/>
    <property type="evidence" value="ECO:0000266"/>
    <property type="project" value="RGD"/>
</dbReference>
<dbReference type="GO" id="GO:0051015">
    <property type="term" value="F:actin filament binding"/>
    <property type="evidence" value="ECO:0000266"/>
    <property type="project" value="RGD"/>
</dbReference>
<dbReference type="GO" id="GO:0003785">
    <property type="term" value="F:actin monomer binding"/>
    <property type="evidence" value="ECO:0000266"/>
    <property type="project" value="RGD"/>
</dbReference>
<dbReference type="GO" id="GO:0008092">
    <property type="term" value="F:cytoskeletal protein binding"/>
    <property type="evidence" value="ECO:0000266"/>
    <property type="project" value="RGD"/>
</dbReference>
<dbReference type="GO" id="GO:0042802">
    <property type="term" value="F:identical protein binding"/>
    <property type="evidence" value="ECO:0000266"/>
    <property type="project" value="RGD"/>
</dbReference>
<dbReference type="GO" id="GO:0032036">
    <property type="term" value="F:myosin heavy chain binding"/>
    <property type="evidence" value="ECO:0000266"/>
    <property type="project" value="RGD"/>
</dbReference>
<dbReference type="GO" id="GO:0043548">
    <property type="term" value="F:phosphatidylinositol 3-kinase binding"/>
    <property type="evidence" value="ECO:0000266"/>
    <property type="project" value="RGD"/>
</dbReference>
<dbReference type="GO" id="GO:0042803">
    <property type="term" value="F:protein homodimerization activity"/>
    <property type="evidence" value="ECO:0000266"/>
    <property type="project" value="RGD"/>
</dbReference>
<dbReference type="GO" id="GO:0030036">
    <property type="term" value="P:actin cytoskeleton organization"/>
    <property type="evidence" value="ECO:0000266"/>
    <property type="project" value="RGD"/>
</dbReference>
<dbReference type="GO" id="GO:0007015">
    <property type="term" value="P:actin filament organization"/>
    <property type="evidence" value="ECO:0000266"/>
    <property type="project" value="RGD"/>
</dbReference>
<dbReference type="GO" id="GO:0006816">
    <property type="term" value="P:calcium ion transport"/>
    <property type="evidence" value="ECO:0000266"/>
    <property type="project" value="RGD"/>
</dbReference>
<dbReference type="GO" id="GO:0016477">
    <property type="term" value="P:cell migration"/>
    <property type="evidence" value="ECO:0000318"/>
    <property type="project" value="GO_Central"/>
</dbReference>
<dbReference type="GO" id="GO:0031589">
    <property type="term" value="P:cell-substrate adhesion"/>
    <property type="evidence" value="ECO:0000266"/>
    <property type="project" value="RGD"/>
</dbReference>
<dbReference type="GO" id="GO:0071353">
    <property type="term" value="P:cellular response to interleukin-4"/>
    <property type="evidence" value="ECO:0000266"/>
    <property type="project" value="RGD"/>
</dbReference>
<dbReference type="GO" id="GO:0061502">
    <property type="term" value="P:early endosome to recycling endosome transport"/>
    <property type="evidence" value="ECO:0000266"/>
    <property type="project" value="RGD"/>
</dbReference>
<dbReference type="GO" id="GO:0010631">
    <property type="term" value="P:epithelial cell migration"/>
    <property type="evidence" value="ECO:0000266"/>
    <property type="project" value="RGD"/>
</dbReference>
<dbReference type="GO" id="GO:0051649">
    <property type="term" value="P:establishment of localization in cell"/>
    <property type="evidence" value="ECO:0000266"/>
    <property type="project" value="RGD"/>
</dbReference>
<dbReference type="GO" id="GO:0048873">
    <property type="term" value="P:homeostasis of number of cells within a tissue"/>
    <property type="evidence" value="ECO:0000266"/>
    <property type="project" value="RGD"/>
</dbReference>
<dbReference type="GO" id="GO:0030595">
    <property type="term" value="P:leukocyte chemotaxis"/>
    <property type="evidence" value="ECO:0000266"/>
    <property type="project" value="RGD"/>
</dbReference>
<dbReference type="GO" id="GO:0043320">
    <property type="term" value="P:natural killer cell degranulation"/>
    <property type="evidence" value="ECO:0000266"/>
    <property type="project" value="RGD"/>
</dbReference>
<dbReference type="GO" id="GO:0051126">
    <property type="term" value="P:negative regulation of actin nucleation"/>
    <property type="evidence" value="ECO:0000266"/>
    <property type="project" value="RGD"/>
</dbReference>
<dbReference type="GO" id="GO:0043124">
    <property type="term" value="P:negative regulation of canonical NF-kappaB signal transduction"/>
    <property type="evidence" value="ECO:0000266"/>
    <property type="project" value="RGD"/>
</dbReference>
<dbReference type="GO" id="GO:0043524">
    <property type="term" value="P:negative regulation of neuron apoptotic process"/>
    <property type="evidence" value="ECO:0000266"/>
    <property type="project" value="RGD"/>
</dbReference>
<dbReference type="GO" id="GO:0031339">
    <property type="term" value="P:negative regulation of vesicle fusion"/>
    <property type="evidence" value="ECO:0000266"/>
    <property type="project" value="RGD"/>
</dbReference>
<dbReference type="GO" id="GO:0038180">
    <property type="term" value="P:nerve growth factor signaling pathway"/>
    <property type="evidence" value="ECO:0000266"/>
    <property type="project" value="RGD"/>
</dbReference>
<dbReference type="GO" id="GO:0051402">
    <property type="term" value="P:neuron apoptotic process"/>
    <property type="evidence" value="ECO:0000266"/>
    <property type="project" value="RGD"/>
</dbReference>
<dbReference type="GO" id="GO:0006909">
    <property type="term" value="P:phagocytosis"/>
    <property type="evidence" value="ECO:0000266"/>
    <property type="project" value="RGD"/>
</dbReference>
<dbReference type="GO" id="GO:0001845">
    <property type="term" value="P:phagolysosome assembly"/>
    <property type="evidence" value="ECO:0000266"/>
    <property type="project" value="RGD"/>
</dbReference>
<dbReference type="GO" id="GO:0050918">
    <property type="term" value="P:positive chemotaxis"/>
    <property type="evidence" value="ECO:0000266"/>
    <property type="project" value="RGD"/>
</dbReference>
<dbReference type="GO" id="GO:0050870">
    <property type="term" value="P:positive regulation of T cell activation"/>
    <property type="evidence" value="ECO:0000266"/>
    <property type="project" value="RGD"/>
</dbReference>
<dbReference type="GO" id="GO:2000406">
    <property type="term" value="P:positive regulation of T cell migration"/>
    <property type="evidence" value="ECO:0000266"/>
    <property type="project" value="RGD"/>
</dbReference>
<dbReference type="GO" id="GO:0042102">
    <property type="term" value="P:positive regulation of T cell proliferation"/>
    <property type="evidence" value="ECO:0000266"/>
    <property type="project" value="RGD"/>
</dbReference>
<dbReference type="GO" id="GO:0032956">
    <property type="term" value="P:regulation of actin cytoskeleton organization"/>
    <property type="evidence" value="ECO:0000266"/>
    <property type="project" value="RGD"/>
</dbReference>
<dbReference type="GO" id="GO:0030833">
    <property type="term" value="P:regulation of actin filament polymerization"/>
    <property type="evidence" value="ECO:0000266"/>
    <property type="project" value="RGD"/>
</dbReference>
<dbReference type="GO" id="GO:0008064">
    <property type="term" value="P:regulation of actin polymerization or depolymerization"/>
    <property type="evidence" value="ECO:0000266"/>
    <property type="project" value="RGD"/>
</dbReference>
<dbReference type="GO" id="GO:0008360">
    <property type="term" value="P:regulation of cell shape"/>
    <property type="evidence" value="ECO:0000266"/>
    <property type="project" value="RGD"/>
</dbReference>
<dbReference type="GO" id="GO:0051279">
    <property type="term" value="P:regulation of release of sequestered calcium ion into cytosol"/>
    <property type="evidence" value="ECO:0000266"/>
    <property type="project" value="RGD"/>
</dbReference>
<dbReference type="GO" id="GO:0034097">
    <property type="term" value="P:response to cytokine"/>
    <property type="evidence" value="ECO:0000266"/>
    <property type="project" value="RGD"/>
</dbReference>
<dbReference type="GO" id="GO:0042110">
    <property type="term" value="P:T cell activation"/>
    <property type="evidence" value="ECO:0000266"/>
    <property type="project" value="RGD"/>
</dbReference>
<dbReference type="GO" id="GO:0030217">
    <property type="term" value="P:T cell differentiation"/>
    <property type="evidence" value="ECO:0000303"/>
    <property type="project" value="RGD"/>
</dbReference>
<dbReference type="GO" id="GO:0043029">
    <property type="term" value="P:T cell homeostasis"/>
    <property type="evidence" value="ECO:0000266"/>
    <property type="project" value="RGD"/>
</dbReference>
<dbReference type="GO" id="GO:0072678">
    <property type="term" value="P:T cell migration"/>
    <property type="evidence" value="ECO:0000266"/>
    <property type="project" value="RGD"/>
</dbReference>
<dbReference type="GO" id="GO:0042098">
    <property type="term" value="P:T cell proliferation"/>
    <property type="evidence" value="ECO:0000266"/>
    <property type="project" value="RGD"/>
</dbReference>
<dbReference type="GO" id="GO:0072679">
    <property type="term" value="P:thymocyte migration"/>
    <property type="evidence" value="ECO:0000266"/>
    <property type="project" value="RGD"/>
</dbReference>
<dbReference type="GO" id="GO:0032796">
    <property type="term" value="P:uropod organization"/>
    <property type="evidence" value="ECO:0000266"/>
    <property type="project" value="RGD"/>
</dbReference>
<dbReference type="GO" id="GO:0006906">
    <property type="term" value="P:vesicle fusion"/>
    <property type="evidence" value="ECO:0000266"/>
    <property type="project" value="RGD"/>
</dbReference>
<dbReference type="FunFam" id="2.130.10.10:FF:000003">
    <property type="entry name" value="Coronin"/>
    <property type="match status" value="1"/>
</dbReference>
<dbReference type="Gene3D" id="2.130.10.10">
    <property type="entry name" value="YVTN repeat-like/Quinoprotein amine dehydrogenase"/>
    <property type="match status" value="1"/>
</dbReference>
<dbReference type="InterPro" id="IPR015505">
    <property type="entry name" value="Coronin"/>
</dbReference>
<dbReference type="InterPro" id="IPR015048">
    <property type="entry name" value="DUF1899"/>
</dbReference>
<dbReference type="InterPro" id="IPR015049">
    <property type="entry name" value="Trimer_CC"/>
</dbReference>
<dbReference type="InterPro" id="IPR015943">
    <property type="entry name" value="WD40/YVTN_repeat-like_dom_sf"/>
</dbReference>
<dbReference type="InterPro" id="IPR019775">
    <property type="entry name" value="WD40_repeat_CS"/>
</dbReference>
<dbReference type="InterPro" id="IPR036322">
    <property type="entry name" value="WD40_repeat_dom_sf"/>
</dbReference>
<dbReference type="InterPro" id="IPR001680">
    <property type="entry name" value="WD40_rpt"/>
</dbReference>
<dbReference type="PANTHER" id="PTHR10856">
    <property type="entry name" value="CORONIN"/>
    <property type="match status" value="1"/>
</dbReference>
<dbReference type="PANTHER" id="PTHR10856:SF18">
    <property type="entry name" value="CORONIN-1A"/>
    <property type="match status" value="1"/>
</dbReference>
<dbReference type="Pfam" id="PF08953">
    <property type="entry name" value="DUF1899"/>
    <property type="match status" value="1"/>
</dbReference>
<dbReference type="Pfam" id="PF08954">
    <property type="entry name" value="Trimer_CC"/>
    <property type="match status" value="1"/>
</dbReference>
<dbReference type="Pfam" id="PF00400">
    <property type="entry name" value="WD40"/>
    <property type="match status" value="3"/>
</dbReference>
<dbReference type="Pfam" id="PF16300">
    <property type="entry name" value="WD40_4"/>
    <property type="match status" value="1"/>
</dbReference>
<dbReference type="SMART" id="SM01166">
    <property type="entry name" value="DUF1899"/>
    <property type="match status" value="1"/>
</dbReference>
<dbReference type="SMART" id="SM01167">
    <property type="entry name" value="DUF1900"/>
    <property type="match status" value="1"/>
</dbReference>
<dbReference type="SMART" id="SM00320">
    <property type="entry name" value="WD40"/>
    <property type="match status" value="3"/>
</dbReference>
<dbReference type="SUPFAM" id="SSF50978">
    <property type="entry name" value="WD40 repeat-like"/>
    <property type="match status" value="1"/>
</dbReference>
<dbReference type="PROSITE" id="PS00678">
    <property type="entry name" value="WD_REPEATS_1"/>
    <property type="match status" value="2"/>
</dbReference>
<dbReference type="PROSITE" id="PS50082">
    <property type="entry name" value="WD_REPEATS_2"/>
    <property type="match status" value="2"/>
</dbReference>
<dbReference type="PROSITE" id="PS50294">
    <property type="entry name" value="WD_REPEATS_REGION"/>
    <property type="match status" value="1"/>
</dbReference>
<feature type="initiator methionine" description="Removed" evidence="3">
    <location>
        <position position="1"/>
    </location>
</feature>
<feature type="chain" id="PRO_0000270800" description="Coronin-1A">
    <location>
        <begin position="2"/>
        <end position="461"/>
    </location>
</feature>
<feature type="repeat" description="WD 1">
    <location>
        <begin position="13"/>
        <end position="63"/>
    </location>
</feature>
<feature type="repeat" description="WD 2">
    <location>
        <begin position="73"/>
        <end position="110"/>
    </location>
</feature>
<feature type="repeat" description="WD 3">
    <location>
        <begin position="123"/>
        <end position="160"/>
    </location>
</feature>
<feature type="repeat" description="WD 4">
    <location>
        <begin position="164"/>
        <end position="204"/>
    </location>
</feature>
<feature type="repeat" description="WD 5">
    <location>
        <begin position="207"/>
        <end position="251"/>
    </location>
</feature>
<feature type="repeat" description="WD 6">
    <location>
        <begin position="258"/>
        <end position="296"/>
    </location>
</feature>
<feature type="repeat" description="WD 7">
    <location>
        <begin position="302"/>
        <end position="349"/>
    </location>
</feature>
<feature type="region of interest" description="Disordered" evidence="5">
    <location>
        <begin position="407"/>
        <end position="431"/>
    </location>
</feature>
<feature type="coiled-coil region" evidence="4">
    <location>
        <begin position="425"/>
        <end position="461"/>
    </location>
</feature>
<feature type="compositionally biased region" description="Basic and acidic residues" evidence="5">
    <location>
        <begin position="407"/>
        <end position="418"/>
    </location>
</feature>
<feature type="compositionally biased region" description="Polar residues" evidence="5">
    <location>
        <begin position="420"/>
        <end position="430"/>
    </location>
</feature>
<feature type="modified residue" description="N-acetylserine" evidence="3">
    <location>
        <position position="2"/>
    </location>
</feature>
<feature type="modified residue" description="Phosphoserine; by PKC" evidence="3">
    <location>
        <position position="2"/>
    </location>
</feature>
<feature type="modified residue" description="Phosphoserine; by PKC" evidence="2">
    <location>
        <position position="412"/>
    </location>
</feature>
<feature type="modified residue" description="Phosphothreonine" evidence="7">
    <location>
        <position position="418"/>
    </location>
</feature>
<feature type="modified residue" description="Phosphoserine" evidence="2">
    <location>
        <position position="422"/>
    </location>
</feature>
<reference key="1">
    <citation type="submission" date="2001-09" db="EMBL/GenBank/DDBJ databases">
        <title>Molecular cloning of rat Coro1a.</title>
        <authorList>
            <person name="Suzuki K."/>
            <person name="Takeshita F."/>
            <person name="Nakata N."/>
            <person name="Makino M."/>
        </authorList>
    </citation>
    <scope>NUCLEOTIDE SEQUENCE [MRNA]</scope>
    <source>
        <strain>Sprague-Dawley</strain>
        <tissue>Spleen</tissue>
    </source>
</reference>
<reference key="2">
    <citation type="submission" date="2002-03" db="EMBL/GenBank/DDBJ databases">
        <title>A new therapeutic strategy of mycobacterium infection by use of anti-TACO sequence.</title>
        <authorList>
            <person name="Kohchi C."/>
            <person name="Inagawa H."/>
            <person name="Makino K."/>
            <person name="Terada H."/>
            <person name="Soma G."/>
        </authorList>
    </citation>
    <scope>NUCLEOTIDE SEQUENCE [MRNA]</scope>
    <source>
        <strain>Fischer 344</strain>
        <tissue>Brain</tissue>
    </source>
</reference>
<reference key="3">
    <citation type="journal article" date="2004" name="Genome Res.">
        <title>The status, quality, and expansion of the NIH full-length cDNA project: the Mammalian Gene Collection (MGC).</title>
        <authorList>
            <consortium name="The MGC Project Team"/>
        </authorList>
    </citation>
    <scope>NUCLEOTIDE SEQUENCE [LARGE SCALE MRNA]</scope>
    <source>
        <tissue>Lung</tissue>
    </source>
</reference>
<reference key="4">
    <citation type="submission" date="2007-04" db="UniProtKB">
        <authorList>
            <person name="Lubec G."/>
            <person name="Afjehi-Sadat L."/>
            <person name="Chen W.-Q."/>
        </authorList>
    </citation>
    <scope>PROTEIN SEQUENCE OF 21-66; 187-196; 215-233; 344-354; 384-393; 417-432 AND 439-446</scope>
    <scope>IDENTIFICATION BY MASS SPECTROMETRY</scope>
    <source>
        <strain>Sprague-Dawley</strain>
        <tissue>Hippocampus</tissue>
        <tissue>Spinal cord</tissue>
    </source>
</reference>
<reference key="5">
    <citation type="journal article" date="2012" name="Nat. Commun.">
        <title>Quantitative maps of protein phosphorylation sites across 14 different rat organs and tissues.</title>
        <authorList>
            <person name="Lundby A."/>
            <person name="Secher A."/>
            <person name="Lage K."/>
            <person name="Nordsborg N.B."/>
            <person name="Dmytriyev A."/>
            <person name="Lundby C."/>
            <person name="Olsen J.V."/>
        </authorList>
    </citation>
    <scope>PHOSPHORYLATION [LARGE SCALE ANALYSIS] AT THR-418</scope>
    <scope>IDENTIFICATION BY MASS SPECTROMETRY [LARGE SCALE ANALYSIS]</scope>
</reference>
<protein>
    <recommendedName>
        <fullName>Coronin-1A</fullName>
    </recommendedName>
    <alternativeName>
        <fullName>Coronin-like protein A</fullName>
        <shortName>Clipin-A</shortName>
    </alternativeName>
    <alternativeName>
        <fullName>Tryptophan aspartate-containing coat protein</fullName>
        <shortName>TACO</shortName>
    </alternativeName>
</protein>
<accession>Q91ZN1</accession>
<proteinExistence type="evidence at protein level"/>
<sequence length="461" mass="51065">MSRQVVRSSKFRHVFGQPAKADQCYEDVRVSQTTWDSGFCAVNPKFMALICEASGGGAFLVLPLGKTGRVDKNVPLVCGHTAPVLDIAWCPHNDNVIASGSEDCTVMVWEIPDGGLVLPLREPVVTLEGHTKRVGIVAWHPTAQNVLLSAGCDNVILVWDVGTGAAVLTLGPDVHPDTIYSVDWSRDGALICTSCRDKRVRVIEPRKGTVVAEKERPHEGTRPVHAVFVSEGKILTTGFSRMSERQVALWDTKHLEEPLSLQELDTSSGVLLPFFDPDTNIVYLCGKGDSSIRYFEITSEAPFLHYLSMFSSKESQRGMGYMPKRGLEVNKCEIARFYKLHERKCEPIAMTVPRKSDLFQEDLYPPTAGPDPALTAEEWLSGRDAGPLLISLKDGYVPPKSRELRVNRGLDSARRRATPEPSSTLSSDTVSRLEEDVRNLNAIVQKLQERLDRLEETVQAK</sequence>
<comment type="function">
    <text evidence="1">May be a crucial component of the cytoskeleton of highly motile cells, functioning both in the invagination of large pieces of plasma membrane, as well as in forming protrusions of the plasma membrane involved in cell locomotion.</text>
</comment>
<comment type="subunit">
    <text evidence="1">Binds actin.</text>
</comment>
<comment type="subcellular location">
    <subcellularLocation>
        <location>Cytoplasm</location>
        <location>Cytoskeleton</location>
    </subcellularLocation>
    <subcellularLocation>
        <location>Cytoplasm</location>
        <location>Cell cortex</location>
    </subcellularLocation>
    <subcellularLocation>
        <location evidence="1">Cytoplasmic vesicle</location>
        <location evidence="1">Phagosome membrane</location>
    </subcellularLocation>
</comment>
<comment type="PTM">
    <text evidence="1">phosphorylation at Ser-412 by PKC strongly down-regulates the association with actin.</text>
</comment>
<comment type="PTM">
    <text evidence="1">Polyubiquitinated by RNF128 with 'Lys-48'-linked chains, leading to proteasomal degradation.</text>
</comment>
<comment type="similarity">
    <text evidence="6">Belongs to the WD repeat coronin family.</text>
</comment>
<name>COR1A_RAT</name>